<feature type="signal peptide" evidence="1">
    <location>
        <begin position="1"/>
        <end position="27"/>
    </location>
</feature>
<feature type="chain" id="PRO_0000024746" description="Probable outer membrane protein pmp16">
    <location>
        <begin position="28"/>
        <end position="952"/>
    </location>
</feature>
<feature type="domain" description="Autotransporter" evidence="2">
    <location>
        <begin position="646"/>
        <end position="952"/>
    </location>
</feature>
<feature type="sequence conflict" description="In Ref. 3; BAA98673." evidence="3" ref="3">
    <original>G</original>
    <variation>A</variation>
    <location>
        <position position="125"/>
    </location>
</feature>
<sequence>MSKTPPKFLFYLGNFTACMFGMTPAVYSLQTDSLEKFALERDEEFRTSFPLLDSLSTLTGFSPITTFVGNRHNSSQDIVLSNYKSIDNILLLWTSAGGAVSCNNFLLSNVEDHAFFSKNLAIGTGGAIACQGACTITKNRGPLIFFSNRGLNNASTGGETRGGAIACNGDFTISQNQGTFYFVNNSVNNWGGALSTNGHCRIQSNRAPLLFFNNTAPSGGGALRSENTTISDNTRPIYFKNNCGNNGGAIQTSVTVAIKNNSGSVIFNNNTALSGSINSGNGSGGAIYTTNLSIDDNPGTILFNNNYCIRDGGAICTQFLTIKNSGHVYFTNNQGNWGGALMLLQDSTCLLFAEQGNIAFQNNEVFLTTFGRYNAIHCTPNSNLQLGANKGYTTAFFDPIEHQHPTTNPLIFNPNANHQGTILFSSAYIPEASDYENNFISSSKNTSELRNGVLSIEDRAGWQFYKFTQKGGILKLGHAASIATTANSETPSTSVGSQVIINNLAINLPSILAKGKAPTLWIRPLQSSAPFTEDNNPTITLSGPLTLLNEENRDPYDSIDLSEPLQNIHLLSLSDVTARHINTDNFHPESLNATEHYGYQGIWSPYWVETITTTNNASIETANTLYRALYANWTPLGYKVNPEYQGDLATTPLWQSFHTMFSLLRSYNRTGDSDIERPFLEIQGIADGLFVHQNSIPGAPGFRIQSTGYSLQASSETSLHQKISLGFAQFFTRTKEIGSSNNVSAHNTVSSLYVELPWFQEAFATSTVLAYGYGDHHLHSLHPSHQEQAEGTCYSHTLAAAIGCSFPWQQKSYLHLSPFVQAIAIRSHQTAFEEIGDNPRKFVSQKPFYNLTLPLGIQGKWQSKFHVPTEWTLELSYQPVLYQQNPQIGVTLLASGGSWDILGHNYVRNALGYKVHNQTALFRSLDLFLDYQGSVSSSTSTHHLQAGSTLKF</sequence>
<evidence type="ECO:0000255" key="1"/>
<evidence type="ECO:0000255" key="2">
    <source>
        <dbReference type="PROSITE-ProRule" id="PRU00556"/>
    </source>
</evidence>
<evidence type="ECO:0000305" key="3"/>
<protein>
    <recommendedName>
        <fullName>Probable outer membrane protein pmp16</fullName>
    </recommendedName>
    <alternativeName>
        <fullName>Polymorphic membrane protein 16</fullName>
    </alternativeName>
</protein>
<dbReference type="EMBL" id="AE001363">
    <property type="protein sequence ID" value="AAD18609.1"/>
    <property type="status" value="ALT_INIT"/>
    <property type="molecule type" value="Genomic_DNA"/>
</dbReference>
<dbReference type="EMBL" id="AE002161">
    <property type="protein sequence ID" value="AAF38142.1"/>
    <property type="molecule type" value="Genomic_DNA"/>
</dbReference>
<dbReference type="EMBL" id="BA000008">
    <property type="protein sequence ID" value="BAA98673.1"/>
    <property type="status" value="ALT_INIT"/>
    <property type="molecule type" value="Genomic_DNA"/>
</dbReference>
<dbReference type="EMBL" id="AE009440">
    <property type="protein sequence ID" value="AAP98416.1"/>
    <property type="molecule type" value="Genomic_DNA"/>
</dbReference>
<dbReference type="PIR" id="A72075">
    <property type="entry name" value="A72075"/>
</dbReference>
<dbReference type="PIR" id="D81593">
    <property type="entry name" value="D81593"/>
</dbReference>
<dbReference type="RefSeq" id="NP_224665.1">
    <property type="nucleotide sequence ID" value="NC_000922.1"/>
</dbReference>
<dbReference type="SMR" id="Q9Z882"/>
<dbReference type="STRING" id="406984.CPK_ORF00982"/>
<dbReference type="KEGG" id="cpa:CP_0285"/>
<dbReference type="KEGG" id="cpj:pmp_16"/>
<dbReference type="KEGG" id="cpn:CPn_0467"/>
<dbReference type="KEGG" id="cpt:CpB0485"/>
<dbReference type="PATRIC" id="fig|115713.3.peg.523"/>
<dbReference type="eggNOG" id="COG3210">
    <property type="taxonomic scope" value="Bacteria"/>
</dbReference>
<dbReference type="HOGENOM" id="CLU_004549_2_0_0"/>
<dbReference type="Proteomes" id="UP000000583">
    <property type="component" value="Chromosome"/>
</dbReference>
<dbReference type="Proteomes" id="UP000000801">
    <property type="component" value="Chromosome"/>
</dbReference>
<dbReference type="GO" id="GO:0009279">
    <property type="term" value="C:cell outer membrane"/>
    <property type="evidence" value="ECO:0007669"/>
    <property type="project" value="UniProtKB-SubCell"/>
</dbReference>
<dbReference type="GO" id="GO:0005576">
    <property type="term" value="C:extracellular region"/>
    <property type="evidence" value="ECO:0007669"/>
    <property type="project" value="UniProtKB-KW"/>
</dbReference>
<dbReference type="Gene3D" id="2.40.128.130">
    <property type="entry name" value="Autotransporter beta-domain"/>
    <property type="match status" value="1"/>
</dbReference>
<dbReference type="InterPro" id="IPR005546">
    <property type="entry name" value="Autotransporte_beta"/>
</dbReference>
<dbReference type="InterPro" id="IPR036709">
    <property type="entry name" value="Autotransporte_beta_dom_sf"/>
</dbReference>
<dbReference type="InterPro" id="IPR011427">
    <property type="entry name" value="Polymorphic_membr_middle"/>
</dbReference>
<dbReference type="InterPro" id="IPR003368">
    <property type="entry name" value="POMP_repeat"/>
</dbReference>
<dbReference type="NCBIfam" id="TIGR01376">
    <property type="entry name" value="POMP_repeat"/>
    <property type="match status" value="3"/>
</dbReference>
<dbReference type="Pfam" id="PF03797">
    <property type="entry name" value="Autotransporter"/>
    <property type="match status" value="1"/>
</dbReference>
<dbReference type="Pfam" id="PF02415">
    <property type="entry name" value="Chlam_PMP"/>
    <property type="match status" value="3"/>
</dbReference>
<dbReference type="Pfam" id="PF07548">
    <property type="entry name" value="ChlamPMP_M"/>
    <property type="match status" value="1"/>
</dbReference>
<dbReference type="SMART" id="SM00869">
    <property type="entry name" value="Autotransporter"/>
    <property type="match status" value="1"/>
</dbReference>
<dbReference type="SUPFAM" id="SSF103515">
    <property type="entry name" value="Autotransporter"/>
    <property type="match status" value="1"/>
</dbReference>
<dbReference type="PROSITE" id="PS51208">
    <property type="entry name" value="AUTOTRANSPORTER"/>
    <property type="match status" value="1"/>
</dbReference>
<proteinExistence type="evidence at transcript level"/>
<gene>
    <name type="primary">pmp16</name>
    <name type="ordered locus">CPn_0467</name>
    <name type="ordered locus">CP_0285</name>
    <name type="ordered locus">CpB0485</name>
</gene>
<comment type="subcellular location">
    <subcellularLocation>
        <location>Secreted</location>
        <location>Cell wall</location>
    </subcellularLocation>
    <subcellularLocation>
        <location evidence="3">Cell outer membrane</location>
        <topology evidence="3">Peripheral membrane protein</topology>
        <orientation evidence="3">Extracellular side</orientation>
    </subcellularLocation>
</comment>
<comment type="developmental stage">
    <text>Elementary body.</text>
</comment>
<comment type="similarity">
    <text evidence="3">Belongs to the PMP outer membrane protein family.</text>
</comment>
<comment type="sequence caution" evidence="3">
    <conflict type="erroneous initiation">
        <sequence resource="EMBL-CDS" id="AAD18609"/>
    </conflict>
</comment>
<comment type="sequence caution" evidence="3">
    <conflict type="erroneous initiation">
        <sequence resource="EMBL-CDS" id="BAA98673"/>
    </conflict>
</comment>
<name>PMP16_CHLPN</name>
<keyword id="KW-0998">Cell outer membrane</keyword>
<keyword id="KW-0134">Cell wall</keyword>
<keyword id="KW-0472">Membrane</keyword>
<keyword id="KW-0964">Secreted</keyword>
<keyword id="KW-0732">Signal</keyword>
<keyword id="KW-0812">Transmembrane</keyword>
<keyword id="KW-1134">Transmembrane beta strand</keyword>
<reference key="1">
    <citation type="journal article" date="1999" name="Nat. Genet.">
        <title>Comparative genomes of Chlamydia pneumoniae and C. trachomatis.</title>
        <authorList>
            <person name="Kalman S."/>
            <person name="Mitchell W.P."/>
            <person name="Marathe R."/>
            <person name="Lammel C.J."/>
            <person name="Fan J."/>
            <person name="Hyman R.W."/>
            <person name="Olinger L."/>
            <person name="Grimwood J."/>
            <person name="Davis R.W."/>
            <person name="Stephens R.S."/>
        </authorList>
    </citation>
    <scope>NUCLEOTIDE SEQUENCE [LARGE SCALE GENOMIC DNA]</scope>
    <source>
        <strain>CWL029</strain>
    </source>
</reference>
<reference key="2">
    <citation type="journal article" date="2000" name="Nucleic Acids Res.">
        <title>Genome sequences of Chlamydia trachomatis MoPn and Chlamydia pneumoniae AR39.</title>
        <authorList>
            <person name="Read T.D."/>
            <person name="Brunham R.C."/>
            <person name="Shen C."/>
            <person name="Gill S.R."/>
            <person name="Heidelberg J.F."/>
            <person name="White O."/>
            <person name="Hickey E.K."/>
            <person name="Peterson J.D."/>
            <person name="Utterback T.R."/>
            <person name="Berry K.J."/>
            <person name="Bass S."/>
            <person name="Linher K.D."/>
            <person name="Weidman J.F."/>
            <person name="Khouri H.M."/>
            <person name="Craven B."/>
            <person name="Bowman C."/>
            <person name="Dodson R.J."/>
            <person name="Gwinn M.L."/>
            <person name="Nelson W.C."/>
            <person name="DeBoy R.T."/>
            <person name="Kolonay J.F."/>
            <person name="McClarty G."/>
            <person name="Salzberg S.L."/>
            <person name="Eisen J.A."/>
            <person name="Fraser C.M."/>
        </authorList>
    </citation>
    <scope>NUCLEOTIDE SEQUENCE [LARGE SCALE GENOMIC DNA]</scope>
    <source>
        <strain>AR39</strain>
    </source>
</reference>
<reference key="3">
    <citation type="journal article" date="2000" name="Nucleic Acids Res.">
        <title>Comparison of whole genome sequences of Chlamydia pneumoniae J138 from Japan and CWL029 from USA.</title>
        <authorList>
            <person name="Shirai M."/>
            <person name="Hirakawa H."/>
            <person name="Kimoto M."/>
            <person name="Tabuchi M."/>
            <person name="Kishi F."/>
            <person name="Ouchi K."/>
            <person name="Shiba T."/>
            <person name="Ishii K."/>
            <person name="Hattori M."/>
            <person name="Kuhara S."/>
            <person name="Nakazawa T."/>
        </authorList>
    </citation>
    <scope>NUCLEOTIDE SEQUENCE [LARGE SCALE GENOMIC DNA]</scope>
    <source>
        <strain>J138</strain>
    </source>
</reference>
<reference key="4">
    <citation type="submission" date="2002-05" db="EMBL/GenBank/DDBJ databases">
        <title>The genome sequence of Chlamydia pneumoniae TW183 and comparison with other Chlamydia strains based on whole genome sequence analysis.</title>
        <authorList>
            <person name="Geng M.M."/>
            <person name="Schuhmacher A."/>
            <person name="Muehldorfer I."/>
            <person name="Bensch K.W."/>
            <person name="Schaefer K.P."/>
            <person name="Schneider S."/>
            <person name="Pohl T."/>
            <person name="Essig A."/>
            <person name="Marre R."/>
            <person name="Melchers K."/>
        </authorList>
    </citation>
    <scope>NUCLEOTIDE SEQUENCE [LARGE SCALE GENOMIC DNA]</scope>
    <source>
        <strain>TW-183</strain>
    </source>
</reference>
<accession>Q9Z882</accession>
<accession>Q9JSE7</accession>
<accession>Q9K2A5</accession>
<organism>
    <name type="scientific">Chlamydia pneumoniae</name>
    <name type="common">Chlamydophila pneumoniae</name>
    <dbReference type="NCBI Taxonomy" id="83558"/>
    <lineage>
        <taxon>Bacteria</taxon>
        <taxon>Pseudomonadati</taxon>
        <taxon>Chlamydiota</taxon>
        <taxon>Chlamydiia</taxon>
        <taxon>Chlamydiales</taxon>
        <taxon>Chlamydiaceae</taxon>
        <taxon>Chlamydia/Chlamydophila group</taxon>
        <taxon>Chlamydia</taxon>
    </lineage>
</organism>